<name>RS15_CAUVN</name>
<organism>
    <name type="scientific">Caulobacter vibrioides (strain NA1000 / CB15N)</name>
    <name type="common">Caulobacter crescentus</name>
    <dbReference type="NCBI Taxonomy" id="565050"/>
    <lineage>
        <taxon>Bacteria</taxon>
        <taxon>Pseudomonadati</taxon>
        <taxon>Pseudomonadota</taxon>
        <taxon>Alphaproteobacteria</taxon>
        <taxon>Caulobacterales</taxon>
        <taxon>Caulobacteraceae</taxon>
        <taxon>Caulobacter</taxon>
    </lineage>
</organism>
<sequence length="89" mass="10141">MSITLERKAALIAEHARSTGDTGSAEVQVAILSERIANLTEHFKTHKKDNHSRRGLLKLVSQRRRLLDHLKKSDAARYQSLIEKLGLRR</sequence>
<proteinExistence type="inferred from homology"/>
<accession>B8GWZ1</accession>
<gene>
    <name evidence="1" type="primary">rpsO</name>
    <name type="ordered locus">CCNA_00034</name>
</gene>
<comment type="function">
    <text evidence="1">One of the primary rRNA binding proteins, it binds directly to 16S rRNA where it helps nucleate assembly of the platform of the 30S subunit by binding and bridging several RNA helices of the 16S rRNA.</text>
</comment>
<comment type="function">
    <text evidence="1">Forms an intersubunit bridge (bridge B4) with the 23S rRNA of the 50S subunit in the ribosome.</text>
</comment>
<comment type="subunit">
    <text evidence="1">Part of the 30S ribosomal subunit. Forms a bridge to the 50S subunit in the 70S ribosome, contacting the 23S rRNA.</text>
</comment>
<comment type="similarity">
    <text evidence="1">Belongs to the universal ribosomal protein uS15 family.</text>
</comment>
<reference key="1">
    <citation type="journal article" date="2010" name="J. Bacteriol.">
        <title>The genetic basis of laboratory adaptation in Caulobacter crescentus.</title>
        <authorList>
            <person name="Marks M.E."/>
            <person name="Castro-Rojas C.M."/>
            <person name="Teiling C."/>
            <person name="Du L."/>
            <person name="Kapatral V."/>
            <person name="Walunas T.L."/>
            <person name="Crosson S."/>
        </authorList>
    </citation>
    <scope>NUCLEOTIDE SEQUENCE [LARGE SCALE GENOMIC DNA]</scope>
    <source>
        <strain>NA1000 / CB15N</strain>
    </source>
</reference>
<protein>
    <recommendedName>
        <fullName evidence="1">Small ribosomal subunit protein uS15</fullName>
    </recommendedName>
    <alternativeName>
        <fullName evidence="2">30S ribosomal protein S15</fullName>
    </alternativeName>
</protein>
<feature type="chain" id="PRO_1000166409" description="Small ribosomal subunit protein uS15">
    <location>
        <begin position="1"/>
        <end position="89"/>
    </location>
</feature>
<dbReference type="EMBL" id="CP001340">
    <property type="protein sequence ID" value="ACL93501.1"/>
    <property type="molecule type" value="Genomic_DNA"/>
</dbReference>
<dbReference type="RefSeq" id="WP_010917925.1">
    <property type="nucleotide sequence ID" value="NC_011916.1"/>
</dbReference>
<dbReference type="RefSeq" id="YP_002515409.1">
    <property type="nucleotide sequence ID" value="NC_011916.1"/>
</dbReference>
<dbReference type="SMR" id="B8GWZ1"/>
<dbReference type="GeneID" id="7332124"/>
<dbReference type="KEGG" id="ccs:CCNA_00034"/>
<dbReference type="PATRIC" id="fig|565050.3.peg.35"/>
<dbReference type="HOGENOM" id="CLU_148518_0_0_5"/>
<dbReference type="OrthoDB" id="9799262at2"/>
<dbReference type="PhylomeDB" id="B8GWZ1"/>
<dbReference type="Proteomes" id="UP000001364">
    <property type="component" value="Chromosome"/>
</dbReference>
<dbReference type="GO" id="GO:0022627">
    <property type="term" value="C:cytosolic small ribosomal subunit"/>
    <property type="evidence" value="ECO:0007669"/>
    <property type="project" value="TreeGrafter"/>
</dbReference>
<dbReference type="GO" id="GO:0019843">
    <property type="term" value="F:rRNA binding"/>
    <property type="evidence" value="ECO:0007669"/>
    <property type="project" value="UniProtKB-UniRule"/>
</dbReference>
<dbReference type="GO" id="GO:0003735">
    <property type="term" value="F:structural constituent of ribosome"/>
    <property type="evidence" value="ECO:0007669"/>
    <property type="project" value="InterPro"/>
</dbReference>
<dbReference type="GO" id="GO:0006412">
    <property type="term" value="P:translation"/>
    <property type="evidence" value="ECO:0007669"/>
    <property type="project" value="UniProtKB-UniRule"/>
</dbReference>
<dbReference type="CDD" id="cd00353">
    <property type="entry name" value="Ribosomal_S15p_S13e"/>
    <property type="match status" value="1"/>
</dbReference>
<dbReference type="FunFam" id="1.10.287.10:FF:000002">
    <property type="entry name" value="30S ribosomal protein S15"/>
    <property type="match status" value="1"/>
</dbReference>
<dbReference type="Gene3D" id="6.10.250.3130">
    <property type="match status" value="1"/>
</dbReference>
<dbReference type="Gene3D" id="1.10.287.10">
    <property type="entry name" value="S15/NS1, RNA-binding"/>
    <property type="match status" value="1"/>
</dbReference>
<dbReference type="HAMAP" id="MF_01343_B">
    <property type="entry name" value="Ribosomal_uS15_B"/>
    <property type="match status" value="1"/>
</dbReference>
<dbReference type="InterPro" id="IPR000589">
    <property type="entry name" value="Ribosomal_uS15"/>
</dbReference>
<dbReference type="InterPro" id="IPR005290">
    <property type="entry name" value="Ribosomal_uS15_bac-type"/>
</dbReference>
<dbReference type="InterPro" id="IPR009068">
    <property type="entry name" value="uS15_NS1_RNA-bd_sf"/>
</dbReference>
<dbReference type="NCBIfam" id="TIGR00952">
    <property type="entry name" value="S15_bact"/>
    <property type="match status" value="1"/>
</dbReference>
<dbReference type="PANTHER" id="PTHR23321">
    <property type="entry name" value="RIBOSOMAL PROTEIN S15, BACTERIAL AND ORGANELLAR"/>
    <property type="match status" value="1"/>
</dbReference>
<dbReference type="PANTHER" id="PTHR23321:SF26">
    <property type="entry name" value="SMALL RIBOSOMAL SUBUNIT PROTEIN US15M"/>
    <property type="match status" value="1"/>
</dbReference>
<dbReference type="Pfam" id="PF00312">
    <property type="entry name" value="Ribosomal_S15"/>
    <property type="match status" value="1"/>
</dbReference>
<dbReference type="SMART" id="SM01387">
    <property type="entry name" value="Ribosomal_S15"/>
    <property type="match status" value="1"/>
</dbReference>
<dbReference type="SUPFAM" id="SSF47060">
    <property type="entry name" value="S15/NS1 RNA-binding domain"/>
    <property type="match status" value="1"/>
</dbReference>
<keyword id="KW-1185">Reference proteome</keyword>
<keyword id="KW-0687">Ribonucleoprotein</keyword>
<keyword id="KW-0689">Ribosomal protein</keyword>
<keyword id="KW-0694">RNA-binding</keyword>
<keyword id="KW-0699">rRNA-binding</keyword>
<evidence type="ECO:0000255" key="1">
    <source>
        <dbReference type="HAMAP-Rule" id="MF_01343"/>
    </source>
</evidence>
<evidence type="ECO:0000305" key="2"/>